<comment type="subcellular location">
    <subcellularLocation>
        <location evidence="2">Mitochondrion</location>
    </subcellularLocation>
</comment>
<comment type="similarity">
    <text evidence="2">Belongs to the PPR family. P subfamily.</text>
</comment>
<comment type="online information" name="Pentatricopeptide repeat proteins">
    <link uri="https://ppr.plantenergy.uwa.edu.au"/>
</comment>
<evidence type="ECO:0000255" key="1"/>
<evidence type="ECO:0000305" key="2"/>
<protein>
    <recommendedName>
        <fullName>Pentatricopeptide repeat-containing protein At3g25210, mitochondrial</fullName>
    </recommendedName>
</protein>
<sequence>MSATLRRLILLTSTNRSRNLSPPFLSTAVNHLSLSFSSVSSSPESHTSPSRIRTRTPLETQFETWIQNLKPGFTNSDVVIALRAQSDPDLALDIFRWTAQQRGYKHNHEAYHTMIKQAITGKRNNFVETLIEEVIAGACEMSVPLYNCIIRFCCGRKFLFNRAFDVYNKMLRSDDSKPDLETYTLLLSSLLKRFNKLNVCYVYLHAVRSLTKQMKSNGVIPDTFVLNMIIKAYAKCLEVDEAIRVFKEMALYGSEPNAYTYSYLVKGVCEKGRVGQGLGFYKEMQVKGMVPNGSCYMVLICSLSMERRLDEAVEVVYDMLANSLSPDMLTYNTVLTELCRGGRGSEALEMVEEWKKRDPVMGERNYRTLMDEVYFLNKG</sequence>
<keyword id="KW-0496">Mitochondrion</keyword>
<keyword id="KW-1185">Reference proteome</keyword>
<keyword id="KW-0677">Repeat</keyword>
<keyword id="KW-0809">Transit peptide</keyword>
<gene>
    <name type="ordered locus">At3g25210</name>
    <name type="ORF">MJL12.16</name>
</gene>
<name>PP254_ARATH</name>
<feature type="transit peptide" description="Mitochondrion" evidence="1">
    <location>
        <begin position="1"/>
        <end status="unknown"/>
    </location>
</feature>
<feature type="chain" id="PRO_0000356113" description="Pentatricopeptide repeat-containing protein At3g25210, mitochondrial">
    <location>
        <begin status="unknown"/>
        <end position="379"/>
    </location>
</feature>
<feature type="repeat" description="PPR 1">
    <location>
        <begin position="142"/>
        <end position="177"/>
    </location>
</feature>
<feature type="repeat" description="PPR 2">
    <location>
        <begin position="179"/>
        <end position="221"/>
    </location>
</feature>
<feature type="repeat" description="PPR 3">
    <location>
        <begin position="222"/>
        <end position="256"/>
    </location>
</feature>
<feature type="repeat" description="PPR 4">
    <location>
        <begin position="257"/>
        <end position="291"/>
    </location>
</feature>
<feature type="repeat" description="PPR 5">
    <location>
        <begin position="292"/>
        <end position="326"/>
    </location>
</feature>
<feature type="repeat" description="PPR 6">
    <location>
        <begin position="327"/>
        <end position="361"/>
    </location>
</feature>
<feature type="sequence conflict" description="In Ref. 3." evidence="2" ref="3">
    <original>V</original>
    <variation>F</variation>
    <location>
        <position position="143"/>
    </location>
</feature>
<feature type="sequence conflict" description="In Ref. 3." evidence="2" ref="3">
    <original>C</original>
    <variation>F</variation>
    <location>
        <position position="200"/>
    </location>
</feature>
<feature type="sequence conflict" description="In Ref. 3." evidence="2" ref="3">
    <original>F</original>
    <variation>L</variation>
    <location>
        <position position="375"/>
    </location>
</feature>
<accession>Q9LSF5</accession>
<dbReference type="EMBL" id="AB026647">
    <property type="protein sequence ID" value="BAB02080.1"/>
    <property type="molecule type" value="Genomic_DNA"/>
</dbReference>
<dbReference type="EMBL" id="CP002686">
    <property type="protein sequence ID" value="AEE76993.1"/>
    <property type="molecule type" value="Genomic_DNA"/>
</dbReference>
<dbReference type="EMBL" id="BX824176">
    <property type="status" value="NOT_ANNOTATED_CDS"/>
    <property type="molecule type" value="mRNA"/>
</dbReference>
<dbReference type="RefSeq" id="NP_189158.3">
    <property type="nucleotide sequence ID" value="NM_113427.5"/>
</dbReference>
<dbReference type="SMR" id="Q9LSF5"/>
<dbReference type="FunCoup" id="Q9LSF5">
    <property type="interactions" value="859"/>
</dbReference>
<dbReference type="iPTMnet" id="Q9LSF5"/>
<dbReference type="PaxDb" id="3702-AT3G25210.1"/>
<dbReference type="ProteomicsDB" id="249102"/>
<dbReference type="EnsemblPlants" id="AT3G25210.1">
    <property type="protein sequence ID" value="AT3G25210.1"/>
    <property type="gene ID" value="AT3G25210"/>
</dbReference>
<dbReference type="GeneID" id="822114"/>
<dbReference type="Gramene" id="AT3G25210.1">
    <property type="protein sequence ID" value="AT3G25210.1"/>
    <property type="gene ID" value="AT3G25210"/>
</dbReference>
<dbReference type="KEGG" id="ath:AT3G25210"/>
<dbReference type="Araport" id="AT3G25210"/>
<dbReference type="TAIR" id="AT3G25210"/>
<dbReference type="eggNOG" id="KOG4197">
    <property type="taxonomic scope" value="Eukaryota"/>
</dbReference>
<dbReference type="HOGENOM" id="CLU_040105_1_0_1"/>
<dbReference type="InParanoid" id="Q9LSF5"/>
<dbReference type="OMA" id="KQFETWI"/>
<dbReference type="PhylomeDB" id="Q9LSF5"/>
<dbReference type="PRO" id="PR:Q9LSF5"/>
<dbReference type="Proteomes" id="UP000006548">
    <property type="component" value="Chromosome 3"/>
</dbReference>
<dbReference type="ExpressionAtlas" id="Q9LSF5">
    <property type="expression patterns" value="baseline and differential"/>
</dbReference>
<dbReference type="GO" id="GO:0005739">
    <property type="term" value="C:mitochondrion"/>
    <property type="evidence" value="ECO:0007669"/>
    <property type="project" value="UniProtKB-SubCell"/>
</dbReference>
<dbReference type="Gene3D" id="1.25.40.10">
    <property type="entry name" value="Tetratricopeptide repeat domain"/>
    <property type="match status" value="3"/>
</dbReference>
<dbReference type="InterPro" id="IPR002885">
    <property type="entry name" value="Pentatricopeptide_rpt"/>
</dbReference>
<dbReference type="InterPro" id="IPR011990">
    <property type="entry name" value="TPR-like_helical_dom_sf"/>
</dbReference>
<dbReference type="NCBIfam" id="TIGR00756">
    <property type="entry name" value="PPR"/>
    <property type="match status" value="5"/>
</dbReference>
<dbReference type="PANTHER" id="PTHR47938:SF2">
    <property type="entry name" value="OS06G0184866 PROTEIN"/>
    <property type="match status" value="1"/>
</dbReference>
<dbReference type="PANTHER" id="PTHR47938">
    <property type="entry name" value="RESPIRATORY COMPLEX I CHAPERONE (CIA84), PUTATIVE (AFU_ORTHOLOGUE AFUA_2G06020)-RELATED"/>
    <property type="match status" value="1"/>
</dbReference>
<dbReference type="Pfam" id="PF13041">
    <property type="entry name" value="PPR_2"/>
    <property type="match status" value="2"/>
</dbReference>
<dbReference type="PROSITE" id="PS51375">
    <property type="entry name" value="PPR"/>
    <property type="match status" value="6"/>
</dbReference>
<proteinExistence type="evidence at transcript level"/>
<reference key="1">
    <citation type="journal article" date="2000" name="DNA Res.">
        <title>Structural analysis of Arabidopsis thaliana chromosome 3. I. Sequence features of the regions of 4,504,864 bp covered by sixty P1 and TAC clones.</title>
        <authorList>
            <person name="Sato S."/>
            <person name="Nakamura Y."/>
            <person name="Kaneko T."/>
            <person name="Katoh T."/>
            <person name="Asamizu E."/>
            <person name="Tabata S."/>
        </authorList>
    </citation>
    <scope>NUCLEOTIDE SEQUENCE [LARGE SCALE GENOMIC DNA]</scope>
    <source>
        <strain>cv. Columbia</strain>
    </source>
</reference>
<reference key="2">
    <citation type="journal article" date="2017" name="Plant J.">
        <title>Araport11: a complete reannotation of the Arabidopsis thaliana reference genome.</title>
        <authorList>
            <person name="Cheng C.Y."/>
            <person name="Krishnakumar V."/>
            <person name="Chan A.P."/>
            <person name="Thibaud-Nissen F."/>
            <person name="Schobel S."/>
            <person name="Town C.D."/>
        </authorList>
    </citation>
    <scope>GENOME REANNOTATION</scope>
    <source>
        <strain>cv. Columbia</strain>
    </source>
</reference>
<reference key="3">
    <citation type="journal article" date="2004" name="Genome Res.">
        <title>Whole genome sequence comparisons and 'full-length' cDNA sequences: a combined approach to evaluate and improve Arabidopsis genome annotation.</title>
        <authorList>
            <person name="Castelli V."/>
            <person name="Aury J.-M."/>
            <person name="Jaillon O."/>
            <person name="Wincker P."/>
            <person name="Clepet C."/>
            <person name="Menard M."/>
            <person name="Cruaud C."/>
            <person name="Quetier F."/>
            <person name="Scarpelli C."/>
            <person name="Schaechter V."/>
            <person name="Temple G."/>
            <person name="Caboche M."/>
            <person name="Weissenbach J."/>
            <person name="Salanoubat M."/>
        </authorList>
    </citation>
    <scope>NUCLEOTIDE SEQUENCE [LARGE SCALE MRNA] OF 15-379</scope>
    <source>
        <strain>cv. Columbia</strain>
    </source>
</reference>
<reference key="4">
    <citation type="journal article" date="2004" name="Plant Cell">
        <title>Genome-wide analysis of Arabidopsis pentatricopeptide repeat proteins reveals their essential role in organelle biogenesis.</title>
        <authorList>
            <person name="Lurin C."/>
            <person name="Andres C."/>
            <person name="Aubourg S."/>
            <person name="Bellaoui M."/>
            <person name="Bitton F."/>
            <person name="Bruyere C."/>
            <person name="Caboche M."/>
            <person name="Debast C."/>
            <person name="Gualberto J."/>
            <person name="Hoffmann B."/>
            <person name="Lecharny A."/>
            <person name="Le Ret M."/>
            <person name="Martin-Magniette M.-L."/>
            <person name="Mireau H."/>
            <person name="Peeters N."/>
            <person name="Renou J.-P."/>
            <person name="Szurek B."/>
            <person name="Taconnat L."/>
            <person name="Small I."/>
        </authorList>
    </citation>
    <scope>GENE FAMILY</scope>
</reference>
<organism>
    <name type="scientific">Arabidopsis thaliana</name>
    <name type="common">Mouse-ear cress</name>
    <dbReference type="NCBI Taxonomy" id="3702"/>
    <lineage>
        <taxon>Eukaryota</taxon>
        <taxon>Viridiplantae</taxon>
        <taxon>Streptophyta</taxon>
        <taxon>Embryophyta</taxon>
        <taxon>Tracheophyta</taxon>
        <taxon>Spermatophyta</taxon>
        <taxon>Magnoliopsida</taxon>
        <taxon>eudicotyledons</taxon>
        <taxon>Gunneridae</taxon>
        <taxon>Pentapetalae</taxon>
        <taxon>rosids</taxon>
        <taxon>malvids</taxon>
        <taxon>Brassicales</taxon>
        <taxon>Brassicaceae</taxon>
        <taxon>Camelineae</taxon>
        <taxon>Arabidopsis</taxon>
    </lineage>
</organism>